<proteinExistence type="inferred from homology"/>
<sequence>MVGGPRVVVALDFSDRKQLDEFVAKLDPGLCRLKVGKELFTTFGPAIVEQLQARGFEVFLDLKFHDIPNTTAQAVKAAAGLGVWMVNVHASGGRRMMEACREVLEQESHAPLLIAVTMLTSLSDEEIVEIGFPCSAQEMVGRLAVLAQSSGMDGVVCSAQEAPLLRRAHGEEFCLVTPGIRPAAAAADDQTRIVTPAQAITDGSSYLVVGRPITRALNPLDALQQIVKEVESV</sequence>
<feature type="chain" id="PRO_0000241865" description="Orotidine 5'-phosphate decarboxylase">
    <location>
        <begin position="1"/>
        <end position="233"/>
    </location>
</feature>
<feature type="active site" description="Proton donor" evidence="1">
    <location>
        <position position="63"/>
    </location>
</feature>
<feature type="binding site" evidence="1">
    <location>
        <position position="12"/>
    </location>
    <ligand>
        <name>substrate</name>
    </ligand>
</feature>
<feature type="binding site" evidence="1">
    <location>
        <position position="34"/>
    </location>
    <ligand>
        <name>substrate</name>
    </ligand>
</feature>
<feature type="binding site" evidence="1">
    <location>
        <begin position="61"/>
        <end position="70"/>
    </location>
    <ligand>
        <name>substrate</name>
    </ligand>
</feature>
<feature type="binding site" evidence="1">
    <location>
        <position position="120"/>
    </location>
    <ligand>
        <name>substrate</name>
    </ligand>
</feature>
<feature type="binding site" evidence="1">
    <location>
        <position position="181"/>
    </location>
    <ligand>
        <name>substrate</name>
    </ligand>
</feature>
<feature type="binding site" evidence="1">
    <location>
        <position position="190"/>
    </location>
    <ligand>
        <name>substrate</name>
    </ligand>
</feature>
<feature type="binding site" evidence="1">
    <location>
        <position position="210"/>
    </location>
    <ligand>
        <name>substrate</name>
    </ligand>
</feature>
<feature type="binding site" evidence="1">
    <location>
        <position position="211"/>
    </location>
    <ligand>
        <name>substrate</name>
    </ligand>
</feature>
<comment type="function">
    <text evidence="1">Catalyzes the decarboxylation of orotidine 5'-monophosphate (OMP) to uridine 5'-monophosphate (UMP).</text>
</comment>
<comment type="catalytic activity">
    <reaction evidence="1">
        <text>orotidine 5'-phosphate + H(+) = UMP + CO2</text>
        <dbReference type="Rhea" id="RHEA:11596"/>
        <dbReference type="ChEBI" id="CHEBI:15378"/>
        <dbReference type="ChEBI" id="CHEBI:16526"/>
        <dbReference type="ChEBI" id="CHEBI:57538"/>
        <dbReference type="ChEBI" id="CHEBI:57865"/>
        <dbReference type="EC" id="4.1.1.23"/>
    </reaction>
</comment>
<comment type="pathway">
    <text evidence="1">Pyrimidine metabolism; UMP biosynthesis via de novo pathway; UMP from orotate: step 2/2.</text>
</comment>
<comment type="subunit">
    <text evidence="1">Homodimer.</text>
</comment>
<comment type="similarity">
    <text evidence="1">Belongs to the OMP decarboxylase family. Type 1 subfamily.</text>
</comment>
<organism>
    <name type="scientific">Hahella chejuensis (strain KCTC 2396)</name>
    <dbReference type="NCBI Taxonomy" id="349521"/>
    <lineage>
        <taxon>Bacteria</taxon>
        <taxon>Pseudomonadati</taxon>
        <taxon>Pseudomonadota</taxon>
        <taxon>Gammaproteobacteria</taxon>
        <taxon>Oceanospirillales</taxon>
        <taxon>Hahellaceae</taxon>
        <taxon>Hahella</taxon>
    </lineage>
</organism>
<gene>
    <name evidence="1" type="primary">pyrF</name>
    <name type="ordered locus">HCH_04974</name>
</gene>
<accession>Q2SCG0</accession>
<keyword id="KW-0210">Decarboxylase</keyword>
<keyword id="KW-0456">Lyase</keyword>
<keyword id="KW-0665">Pyrimidine biosynthesis</keyword>
<keyword id="KW-1185">Reference proteome</keyword>
<evidence type="ECO:0000255" key="1">
    <source>
        <dbReference type="HAMAP-Rule" id="MF_01200"/>
    </source>
</evidence>
<reference key="1">
    <citation type="journal article" date="2005" name="Nucleic Acids Res.">
        <title>Genomic blueprint of Hahella chejuensis, a marine microbe producing an algicidal agent.</title>
        <authorList>
            <person name="Jeong H."/>
            <person name="Yim J.H."/>
            <person name="Lee C."/>
            <person name="Choi S.-H."/>
            <person name="Park Y.K."/>
            <person name="Yoon S.H."/>
            <person name="Hur C.-G."/>
            <person name="Kang H.-Y."/>
            <person name="Kim D."/>
            <person name="Lee H.H."/>
            <person name="Park K.H."/>
            <person name="Park S.-H."/>
            <person name="Park H.-S."/>
            <person name="Lee H.K."/>
            <person name="Oh T.K."/>
            <person name="Kim J.F."/>
        </authorList>
    </citation>
    <scope>NUCLEOTIDE SEQUENCE [LARGE SCALE GENOMIC DNA]</scope>
    <source>
        <strain>KCTC 2396</strain>
    </source>
</reference>
<name>PYRF_HAHCH</name>
<dbReference type="EC" id="4.1.1.23" evidence="1"/>
<dbReference type="EMBL" id="CP000155">
    <property type="protein sequence ID" value="ABC31664.1"/>
    <property type="molecule type" value="Genomic_DNA"/>
</dbReference>
<dbReference type="RefSeq" id="WP_011398729.1">
    <property type="nucleotide sequence ID" value="NC_007645.1"/>
</dbReference>
<dbReference type="SMR" id="Q2SCG0"/>
<dbReference type="STRING" id="349521.HCH_04974"/>
<dbReference type="KEGG" id="hch:HCH_04974"/>
<dbReference type="eggNOG" id="COG0284">
    <property type="taxonomic scope" value="Bacteria"/>
</dbReference>
<dbReference type="HOGENOM" id="CLU_067069_0_0_6"/>
<dbReference type="OrthoDB" id="9806203at2"/>
<dbReference type="UniPathway" id="UPA00070">
    <property type="reaction ID" value="UER00120"/>
</dbReference>
<dbReference type="Proteomes" id="UP000000238">
    <property type="component" value="Chromosome"/>
</dbReference>
<dbReference type="GO" id="GO:0005829">
    <property type="term" value="C:cytosol"/>
    <property type="evidence" value="ECO:0007669"/>
    <property type="project" value="TreeGrafter"/>
</dbReference>
<dbReference type="GO" id="GO:0004590">
    <property type="term" value="F:orotidine-5'-phosphate decarboxylase activity"/>
    <property type="evidence" value="ECO:0007669"/>
    <property type="project" value="UniProtKB-UniRule"/>
</dbReference>
<dbReference type="GO" id="GO:0006207">
    <property type="term" value="P:'de novo' pyrimidine nucleobase biosynthetic process"/>
    <property type="evidence" value="ECO:0007669"/>
    <property type="project" value="InterPro"/>
</dbReference>
<dbReference type="GO" id="GO:0044205">
    <property type="term" value="P:'de novo' UMP biosynthetic process"/>
    <property type="evidence" value="ECO:0007669"/>
    <property type="project" value="UniProtKB-UniRule"/>
</dbReference>
<dbReference type="CDD" id="cd04725">
    <property type="entry name" value="OMP_decarboxylase_like"/>
    <property type="match status" value="1"/>
</dbReference>
<dbReference type="FunFam" id="3.20.20.70:FF:000015">
    <property type="entry name" value="Orotidine 5'-phosphate decarboxylase"/>
    <property type="match status" value="1"/>
</dbReference>
<dbReference type="Gene3D" id="3.20.20.70">
    <property type="entry name" value="Aldolase class I"/>
    <property type="match status" value="1"/>
</dbReference>
<dbReference type="HAMAP" id="MF_01200_B">
    <property type="entry name" value="OMPdecase_type1_B"/>
    <property type="match status" value="1"/>
</dbReference>
<dbReference type="InterPro" id="IPR013785">
    <property type="entry name" value="Aldolase_TIM"/>
</dbReference>
<dbReference type="InterPro" id="IPR014732">
    <property type="entry name" value="OMPdecase"/>
</dbReference>
<dbReference type="InterPro" id="IPR018089">
    <property type="entry name" value="OMPdecase_AS"/>
</dbReference>
<dbReference type="InterPro" id="IPR047596">
    <property type="entry name" value="OMPdecase_bac"/>
</dbReference>
<dbReference type="InterPro" id="IPR001754">
    <property type="entry name" value="OMPdeCOase_dom"/>
</dbReference>
<dbReference type="InterPro" id="IPR011060">
    <property type="entry name" value="RibuloseP-bd_barrel"/>
</dbReference>
<dbReference type="NCBIfam" id="NF001273">
    <property type="entry name" value="PRK00230.1"/>
    <property type="match status" value="1"/>
</dbReference>
<dbReference type="NCBIfam" id="TIGR01740">
    <property type="entry name" value="pyrF"/>
    <property type="match status" value="1"/>
</dbReference>
<dbReference type="PANTHER" id="PTHR32119">
    <property type="entry name" value="OROTIDINE 5'-PHOSPHATE DECARBOXYLASE"/>
    <property type="match status" value="1"/>
</dbReference>
<dbReference type="PANTHER" id="PTHR32119:SF2">
    <property type="entry name" value="OROTIDINE 5'-PHOSPHATE DECARBOXYLASE"/>
    <property type="match status" value="1"/>
</dbReference>
<dbReference type="Pfam" id="PF00215">
    <property type="entry name" value="OMPdecase"/>
    <property type="match status" value="1"/>
</dbReference>
<dbReference type="SMART" id="SM00934">
    <property type="entry name" value="OMPdecase"/>
    <property type="match status" value="1"/>
</dbReference>
<dbReference type="SUPFAM" id="SSF51366">
    <property type="entry name" value="Ribulose-phoshate binding barrel"/>
    <property type="match status" value="1"/>
</dbReference>
<dbReference type="PROSITE" id="PS00156">
    <property type="entry name" value="OMPDECASE"/>
    <property type="match status" value="1"/>
</dbReference>
<protein>
    <recommendedName>
        <fullName evidence="1">Orotidine 5'-phosphate decarboxylase</fullName>
        <ecNumber evidence="1">4.1.1.23</ecNumber>
    </recommendedName>
    <alternativeName>
        <fullName evidence="1">OMP decarboxylase</fullName>
        <shortName evidence="1">OMPDCase</shortName>
        <shortName evidence="1">OMPdecase</shortName>
    </alternativeName>
</protein>